<name>VEA_ASPFU</name>
<comment type="function">
    <text evidence="1 5 6 7">Component of the velvet transcription factor complex that controls sexual/asexual developmental ratio in response to light, promoting sexual development in the darkness while stimulating asexual sporulation under illumination (By similarity). The velvet complex hat acts as a global regulator for secondary metabolite gene expression (By similarity). Controls the expression of hundreds of genes, including those comprising more than a dozen known secondary metabolite gene clusters (PubMed:24116213). Controls the expression of the gliotoxin gene cluster (PubMed:23087369). Controls the expression of the fumagillin, fumitremorgin G, fumigaclavine C and glionitrin gene clusters (PubMed:24116213). The regulation of the fumagillin gene cluster and fumagillin production is performed through direct control of the expression of fumR (PubMed:24116213). Negatively regulates conidiation (PubMed:22970834, PubMed:23087369). Required for normal protease activity (PubMed:23087369).</text>
</comment>
<comment type="subunit">
    <text evidence="1">Component of the heterotrimeric velvet complex composed of laeA, veA and velB; VeA acting as a bridging protein between laeA and velB (By similarity).</text>
</comment>
<comment type="subcellular location">
    <subcellularLocation>
        <location evidence="1">Nucleus</location>
    </subcellularLocation>
    <subcellularLocation>
        <location evidence="1">Cytoplasm</location>
    </subcellularLocation>
    <text evidence="1">Enriched in the nucleus in the dark (By similarity).</text>
</comment>
<comment type="domain">
    <text evidence="1">The C-terminal PEST domain is a region rich in proline, glutamic acid, serine and threonine residues that is required for the light-dependent regulation of development and secondary metabolism (By similarity).</text>
</comment>
<comment type="disruption phenotype">
    <text evidence="4 5 6 7">Reduces sporulation capacities on nitrate-containing medium (PubMed:16002655). Results in the abundant formation of conidiophores (PubMed:22970834). Leads to a reduction of gliotoxin production (PubMed:23087369). Decreases the production of fumagillin, fumitremorgin G, fumigaclavine C and Glionitrin A (PubMed:24116213). Also reduces protease activity (PubMed:23087369).</text>
</comment>
<comment type="similarity">
    <text evidence="9">Belongs to the velvet family. VeA subfamily.</text>
</comment>
<gene>
    <name evidence="8" type="primary">veA</name>
    <name type="ORF">AFUA_1G12490</name>
</gene>
<keyword id="KW-0963">Cytoplasm</keyword>
<keyword id="KW-0539">Nucleus</keyword>
<keyword id="KW-1185">Reference proteome</keyword>
<keyword id="KW-0749">Sporulation</keyword>
<keyword id="KW-0804">Transcription</keyword>
<keyword id="KW-0805">Transcription regulation</keyword>
<reference key="1">
    <citation type="journal article" date="2004" name="Fungal Genet. Biol.">
        <title>Insight into the genome of Aspergillus fumigatus: analysis of a 922 kb region encompassing the nitrate assimilation gene cluster.</title>
        <authorList>
            <person name="Pain A."/>
            <person name="Woodward J.R."/>
            <person name="Quail M.A."/>
            <person name="Anderson M.J."/>
            <person name="Clark R."/>
            <person name="Collins M."/>
            <person name="Fosker N."/>
            <person name="Fraser A."/>
            <person name="Harris D.E."/>
            <person name="Larke N."/>
            <person name="Murphy L.D."/>
            <person name="Humphray S."/>
            <person name="O'Neil S."/>
            <person name="Pertea M."/>
            <person name="Price C."/>
            <person name="Rabbinowitsch E."/>
            <person name="Rajandream M.A."/>
            <person name="Salzberg S.L."/>
            <person name="Saunders D."/>
            <person name="Seeger K."/>
            <person name="Sharp S."/>
            <person name="Warren T."/>
            <person name="Denning D.W."/>
            <person name="Barrell B.G."/>
            <person name="Hall N."/>
        </authorList>
    </citation>
    <scope>NUCLEOTIDE SEQUENCE [GENOMIC DNA]</scope>
    <source>
        <strain>ATCC MYA-4609 / CBS 101355 / FGSC A1100 / Af293</strain>
    </source>
</reference>
<reference key="2">
    <citation type="journal article" date="2005" name="Nature">
        <title>Genomic sequence of the pathogenic and allergenic filamentous fungus Aspergillus fumigatus.</title>
        <authorList>
            <person name="Nierman W.C."/>
            <person name="Pain A."/>
            <person name="Anderson M.J."/>
            <person name="Wortman J.R."/>
            <person name="Kim H.S."/>
            <person name="Arroyo J."/>
            <person name="Berriman M."/>
            <person name="Abe K."/>
            <person name="Archer D.B."/>
            <person name="Bermejo C."/>
            <person name="Bennett J.W."/>
            <person name="Bowyer P."/>
            <person name="Chen D."/>
            <person name="Collins M."/>
            <person name="Coulsen R."/>
            <person name="Davies R."/>
            <person name="Dyer P.S."/>
            <person name="Farman M.L."/>
            <person name="Fedorova N."/>
            <person name="Fedorova N.D."/>
            <person name="Feldblyum T.V."/>
            <person name="Fischer R."/>
            <person name="Fosker N."/>
            <person name="Fraser A."/>
            <person name="Garcia J.L."/>
            <person name="Garcia M.J."/>
            <person name="Goble A."/>
            <person name="Goldman G.H."/>
            <person name="Gomi K."/>
            <person name="Griffith-Jones S."/>
            <person name="Gwilliam R."/>
            <person name="Haas B.J."/>
            <person name="Haas H."/>
            <person name="Harris D.E."/>
            <person name="Horiuchi H."/>
            <person name="Huang J."/>
            <person name="Humphray S."/>
            <person name="Jimenez J."/>
            <person name="Keller N."/>
            <person name="Khouri H."/>
            <person name="Kitamoto K."/>
            <person name="Kobayashi T."/>
            <person name="Konzack S."/>
            <person name="Kulkarni R."/>
            <person name="Kumagai T."/>
            <person name="Lafton A."/>
            <person name="Latge J.-P."/>
            <person name="Li W."/>
            <person name="Lord A."/>
            <person name="Lu C."/>
            <person name="Majoros W.H."/>
            <person name="May G.S."/>
            <person name="Miller B.L."/>
            <person name="Mohamoud Y."/>
            <person name="Molina M."/>
            <person name="Monod M."/>
            <person name="Mouyna I."/>
            <person name="Mulligan S."/>
            <person name="Murphy L.D."/>
            <person name="O'Neil S."/>
            <person name="Paulsen I."/>
            <person name="Penalva M.A."/>
            <person name="Pertea M."/>
            <person name="Price C."/>
            <person name="Pritchard B.L."/>
            <person name="Quail M.A."/>
            <person name="Rabbinowitsch E."/>
            <person name="Rawlins N."/>
            <person name="Rajandream M.A."/>
            <person name="Reichard U."/>
            <person name="Renauld H."/>
            <person name="Robson G.D."/>
            <person name="Rodriguez de Cordoba S."/>
            <person name="Rodriguez-Pena J.M."/>
            <person name="Ronning C.M."/>
            <person name="Rutter S."/>
            <person name="Salzberg S.L."/>
            <person name="Sanchez M."/>
            <person name="Sanchez-Ferrero J.C."/>
            <person name="Saunders D."/>
            <person name="Seeger K."/>
            <person name="Squares R."/>
            <person name="Squares S."/>
            <person name="Takeuchi M."/>
            <person name="Tekaia F."/>
            <person name="Turner G."/>
            <person name="Vazquez de Aldana C.R."/>
            <person name="Weidman J."/>
            <person name="White O."/>
            <person name="Woodward J.R."/>
            <person name="Yu J.-H."/>
            <person name="Fraser C.M."/>
            <person name="Galagan J.E."/>
            <person name="Asai K."/>
            <person name="Machida M."/>
            <person name="Hall N."/>
            <person name="Barrell B.G."/>
            <person name="Denning D.W."/>
        </authorList>
    </citation>
    <scope>NUCLEOTIDE SEQUENCE [LARGE SCALE GENOMIC DNA]</scope>
    <source>
        <strain>ATCC MYA-4609 / CBS 101355 / FGSC A1100 / Af293</strain>
    </source>
</reference>
<reference key="3">
    <citation type="journal article" date="2005" name="Eukaryot. Cell">
        <title>Deletion and allelic exchange of the Aspergillus fumigatus veA locus via a novel recyclable marker module.</title>
        <authorList>
            <person name="Krappmann S."/>
            <person name="Bayram O."/>
            <person name="Braus G.H."/>
        </authorList>
    </citation>
    <scope>DISRUPTION PHENOTYPE</scope>
</reference>
<reference key="4">
    <citation type="journal article" date="2012" name="Eukaryot. Cell">
        <title>VeA regulates conidiation, gliotoxin production, and protease activity in the opportunistic human pathogen Aspergillus fumigatus.</title>
        <authorList>
            <person name="Dhingra S."/>
            <person name="Andes D."/>
            <person name="Calvo A.M."/>
        </authorList>
    </citation>
    <scope>FUNCTION</scope>
    <scope>DISRUPTION PHENOTYPE</scope>
</reference>
<reference key="5">
    <citation type="journal article" date="2012" name="Mol. Microbiol.">
        <title>Characterization of the velvet regulators in Aspergillus fumigatus.</title>
        <authorList>
            <person name="Park H.S."/>
            <person name="Bayram O."/>
            <person name="Braus G.H."/>
            <person name="Kim S.C."/>
            <person name="Yu J.H."/>
        </authorList>
    </citation>
    <scope>FUNCTION</scope>
    <scope>DISRUPTION PHENOTYPE</scope>
    <scope>IDENTIFICATION IN THE VELVET COMPLEX</scope>
</reference>
<reference key="6">
    <citation type="journal article" date="2013" name="PLoS ONE">
        <title>The fumagillin gene cluster, an example of hundreds of genes under veA control in Aspergillus fumigatus.</title>
        <authorList>
            <person name="Dhingra S."/>
            <person name="Lind A.L."/>
            <person name="Lin H.C."/>
            <person name="Tang Y."/>
            <person name="Rokas A."/>
            <person name="Calvo A.M."/>
        </authorList>
    </citation>
    <scope>FUNCTION</scope>
    <scope>DISRUPTION PHENOTYPE</scope>
</reference>
<protein>
    <recommendedName>
        <fullName evidence="9">Developmental and secondary metabolism regulator veA</fullName>
    </recommendedName>
    <alternativeName>
        <fullName evidence="9">Velvet complex subunit A</fullName>
    </alternativeName>
</protein>
<sequence length="570" mass="63032">MATRPPLMPPANETESSVSRISREGKKITYKLSVMQQPERARACGAGAKSSADRRPVDPPPVVELRIFESDPNDDLHKTDITFAYNANFFLFATLETARPMAQGRLTGPPTCPVLTGVPVAGVAYLDRPQQAGYFIFPDLSVRHEGRYRLSFHLYEEIKDIKDADKDTPMPDLNSSTNLTKPSAPKAHLNFRLEVKSVPFTVYSAKKFPGLATSTSLSRIIAEQGCRVRIRRDVRMRRRGEKRTDDYDFDDERAFATRSDRYTTPDMYAANSAERARSTSISTTADTSFPYGSDAQRRPSAGDYGFQGAQPYQRSMPAASAAPAPAPVHSPATSAQTSSYQSHLSFGATQSQYPAPQLPPTPQSATPTNTYSPHPSYSHSRNPSNGTEYDATSSGYPYPQPRLPADRPSYSKAALPPLRLEPPKAPNMQTSTDSRSSDANAYPTLSQPPVPRAPTPANHVTSLPPLKVLSGEYSHPSQPNAQSPHHDLGSGKRLLWETNHTLSKRSHEETFGSDERPLHNGMRPDMDQYPSMGRKQPDYGRLPFYTDSRDEMAYKRANGRMVMKILPALP</sequence>
<proteinExistence type="evidence at protein level"/>
<evidence type="ECO:0000250" key="1">
    <source>
        <dbReference type="UniProtKB" id="C8VTV4"/>
    </source>
</evidence>
<evidence type="ECO:0000255" key="2">
    <source>
        <dbReference type="PROSITE-ProRule" id="PRU01165"/>
    </source>
</evidence>
<evidence type="ECO:0000256" key="3">
    <source>
        <dbReference type="SAM" id="MobiDB-lite"/>
    </source>
</evidence>
<evidence type="ECO:0000269" key="4">
    <source>
    </source>
</evidence>
<evidence type="ECO:0000269" key="5">
    <source>
    </source>
</evidence>
<evidence type="ECO:0000269" key="6">
    <source>
    </source>
</evidence>
<evidence type="ECO:0000269" key="7">
    <source>
    </source>
</evidence>
<evidence type="ECO:0000303" key="8">
    <source>
    </source>
</evidence>
<evidence type="ECO:0000305" key="9"/>
<accession>E9RCK4</accession>
<accession>Q4WSK1</accession>
<accession>Q6MYN4</accession>
<feature type="chain" id="PRO_0000435763" description="Developmental and secondary metabolism regulator veA">
    <location>
        <begin position="1"/>
        <end position="570"/>
    </location>
</feature>
<feature type="domain" description="Velvet" evidence="2">
    <location>
        <begin position="25"/>
        <end position="231"/>
    </location>
</feature>
<feature type="region of interest" description="Disordered" evidence="3">
    <location>
        <begin position="1"/>
        <end position="24"/>
    </location>
</feature>
<feature type="region of interest" description="Disordered" evidence="3">
    <location>
        <begin position="39"/>
        <end position="60"/>
    </location>
</feature>
<feature type="region of interest" description="Disordered" evidence="3">
    <location>
        <begin position="266"/>
        <end position="491"/>
    </location>
</feature>
<feature type="region of interest" description="PEST" evidence="1">
    <location>
        <begin position="454"/>
        <end position="493"/>
    </location>
</feature>
<feature type="region of interest" description="Disordered" evidence="3">
    <location>
        <begin position="504"/>
        <end position="541"/>
    </location>
</feature>
<feature type="short sequence motif" description="Nuclear localization signal" evidence="1">
    <location>
        <begin position="39"/>
        <end position="44"/>
    </location>
</feature>
<feature type="compositionally biased region" description="Polar residues" evidence="3">
    <location>
        <begin position="278"/>
        <end position="287"/>
    </location>
</feature>
<feature type="compositionally biased region" description="Low complexity" evidence="3">
    <location>
        <begin position="315"/>
        <end position="335"/>
    </location>
</feature>
<feature type="compositionally biased region" description="Polar residues" evidence="3">
    <location>
        <begin position="336"/>
        <end position="354"/>
    </location>
</feature>
<feature type="compositionally biased region" description="Polar residues" evidence="3">
    <location>
        <begin position="363"/>
        <end position="395"/>
    </location>
</feature>
<feature type="compositionally biased region" description="Polar residues" evidence="3">
    <location>
        <begin position="427"/>
        <end position="445"/>
    </location>
</feature>
<feature type="compositionally biased region" description="Basic and acidic residues" evidence="3">
    <location>
        <begin position="505"/>
        <end position="526"/>
    </location>
</feature>
<dbReference type="EMBL" id="BX649605">
    <property type="protein sequence ID" value="CAE47975.1"/>
    <property type="molecule type" value="Genomic_DNA"/>
</dbReference>
<dbReference type="EMBL" id="AAHF01000004">
    <property type="protein sequence ID" value="EAL90581.1"/>
    <property type="molecule type" value="Genomic_DNA"/>
</dbReference>
<dbReference type="RefSeq" id="XP_752619.1">
    <property type="nucleotide sequence ID" value="XM_747526.1"/>
</dbReference>
<dbReference type="SMR" id="E9RCK4"/>
<dbReference type="STRING" id="330879.E9RCK4"/>
<dbReference type="EnsemblFungi" id="EAL90581">
    <property type="protein sequence ID" value="EAL90581"/>
    <property type="gene ID" value="AFUA_1G12490"/>
</dbReference>
<dbReference type="GeneID" id="3510437"/>
<dbReference type="KEGG" id="afm:AFUA_1G12490"/>
<dbReference type="VEuPathDB" id="FungiDB:Afu1g12490"/>
<dbReference type="eggNOG" id="ENOG502QVY9">
    <property type="taxonomic scope" value="Eukaryota"/>
</dbReference>
<dbReference type="HOGENOM" id="CLU_022491_2_0_1"/>
<dbReference type="InParanoid" id="E9RCK4"/>
<dbReference type="OMA" id="TDITFSY"/>
<dbReference type="OrthoDB" id="5384689at2759"/>
<dbReference type="Proteomes" id="UP000002530">
    <property type="component" value="Chromosome 1"/>
</dbReference>
<dbReference type="GO" id="GO:0005737">
    <property type="term" value="C:cytoplasm"/>
    <property type="evidence" value="ECO:0000314"/>
    <property type="project" value="AspGD"/>
</dbReference>
<dbReference type="GO" id="GO:0005634">
    <property type="term" value="C:nucleus"/>
    <property type="evidence" value="ECO:0000314"/>
    <property type="project" value="AspGD"/>
</dbReference>
<dbReference type="GO" id="GO:0043936">
    <property type="term" value="P:asexual sporulation resulting in formation of a cellular spore"/>
    <property type="evidence" value="ECO:0000315"/>
    <property type="project" value="AspGD"/>
</dbReference>
<dbReference type="GO" id="GO:0070787">
    <property type="term" value="P:conidiophore development"/>
    <property type="evidence" value="ECO:0000315"/>
    <property type="project" value="AspGD"/>
</dbReference>
<dbReference type="GO" id="GO:0070794">
    <property type="term" value="P:negative regulation of conidiophore development"/>
    <property type="evidence" value="ECO:0000315"/>
    <property type="project" value="AspGD"/>
</dbReference>
<dbReference type="GO" id="GO:0043942">
    <property type="term" value="P:negative regulation of sexual sporulation resulting in formation of a cellular spore"/>
    <property type="evidence" value="ECO:0000315"/>
    <property type="project" value="AspGD"/>
</dbReference>
<dbReference type="GO" id="GO:0043945">
    <property type="term" value="P:positive regulation of asexual sporulation resulting in formation of a cellular spore"/>
    <property type="evidence" value="ECO:0000315"/>
    <property type="project" value="AspGD"/>
</dbReference>
<dbReference type="GO" id="GO:1900691">
    <property type="term" value="P:positive regulation of gliotoxin biosynthetic process"/>
    <property type="evidence" value="ECO:0000315"/>
    <property type="project" value="AspGD"/>
</dbReference>
<dbReference type="GO" id="GO:0009847">
    <property type="term" value="P:spore germination"/>
    <property type="evidence" value="ECO:0000315"/>
    <property type="project" value="AspGD"/>
</dbReference>
<dbReference type="GO" id="GO:0030435">
    <property type="term" value="P:sporulation resulting in formation of a cellular spore"/>
    <property type="evidence" value="ECO:0000318"/>
    <property type="project" value="GO_Central"/>
</dbReference>
<dbReference type="GO" id="GO:0005992">
    <property type="term" value="P:trehalose biosynthetic process"/>
    <property type="evidence" value="ECO:0000318"/>
    <property type="project" value="GO_Central"/>
</dbReference>
<dbReference type="FunFam" id="2.60.40.3960:FF:000001">
    <property type="entry name" value="Sexual development activator VeA"/>
    <property type="match status" value="1"/>
</dbReference>
<dbReference type="Gene3D" id="2.60.40.3960">
    <property type="entry name" value="Velvet domain"/>
    <property type="match status" value="1"/>
</dbReference>
<dbReference type="InterPro" id="IPR021740">
    <property type="entry name" value="Velvet"/>
</dbReference>
<dbReference type="InterPro" id="IPR037525">
    <property type="entry name" value="Velvet_dom"/>
</dbReference>
<dbReference type="InterPro" id="IPR038491">
    <property type="entry name" value="Velvet_dom_sf"/>
</dbReference>
<dbReference type="PANTHER" id="PTHR33572:SF14">
    <property type="entry name" value="DEVELOPMENTAL AND SECONDARY METABOLISM REGULATOR VEA"/>
    <property type="match status" value="1"/>
</dbReference>
<dbReference type="PANTHER" id="PTHR33572">
    <property type="entry name" value="SPORE DEVELOPMENT REGULATOR VOSA"/>
    <property type="match status" value="1"/>
</dbReference>
<dbReference type="Pfam" id="PF11754">
    <property type="entry name" value="Velvet"/>
    <property type="match status" value="2"/>
</dbReference>
<dbReference type="PROSITE" id="PS51821">
    <property type="entry name" value="VELVET"/>
    <property type="match status" value="1"/>
</dbReference>
<organism>
    <name type="scientific">Aspergillus fumigatus (strain ATCC MYA-4609 / CBS 101355 / FGSC A1100 / Af293)</name>
    <name type="common">Neosartorya fumigata</name>
    <dbReference type="NCBI Taxonomy" id="330879"/>
    <lineage>
        <taxon>Eukaryota</taxon>
        <taxon>Fungi</taxon>
        <taxon>Dikarya</taxon>
        <taxon>Ascomycota</taxon>
        <taxon>Pezizomycotina</taxon>
        <taxon>Eurotiomycetes</taxon>
        <taxon>Eurotiomycetidae</taxon>
        <taxon>Eurotiales</taxon>
        <taxon>Aspergillaceae</taxon>
        <taxon>Aspergillus</taxon>
        <taxon>Aspergillus subgen. Fumigati</taxon>
    </lineage>
</organism>